<evidence type="ECO:0000255" key="1">
    <source>
        <dbReference type="HAMAP-Rule" id="MF_00037"/>
    </source>
</evidence>
<protein>
    <recommendedName>
        <fullName evidence="1">UDP-N-acetylenolpyruvoylglucosamine reductase</fullName>
        <ecNumber evidence="1">1.3.1.98</ecNumber>
    </recommendedName>
    <alternativeName>
        <fullName evidence="1">UDP-N-acetylmuramate dehydrogenase</fullName>
    </alternativeName>
</protein>
<name>MURB_MOOTA</name>
<gene>
    <name evidence="1" type="primary">murB</name>
    <name type="ordered locus">Moth_0845</name>
</gene>
<sequence>MDLTALAGELQTGLKLQVLTNEPLSRHTTWRLGGPADLLARPRSREELDYCLSFARRKGLPLHILGNGSNLLVLDGGVRGLVVQTREWRQVIIEGRKILATAGTLLPGLLQVASKKGLGGLEFAAGIPATVGGAVVMNAGTPAGCLGDLVVGVEVLDYDGRRHILENREITFTYRHSSLHRAGTVVTVTLELVPDEVPAIRERIEANLHRRRSRQPLEWPNAGSVFKNPPGYYAGRLIEAVGAKGWRVGGAEVAEKHANFIINRGQATAADVMELIDRVREAVARQLGIDLELEIEVWGEGL</sequence>
<feature type="chain" id="PRO_1000002895" description="UDP-N-acetylenolpyruvoylglucosamine reductase">
    <location>
        <begin position="1"/>
        <end position="302"/>
    </location>
</feature>
<feature type="domain" description="FAD-binding PCMH-type" evidence="1">
    <location>
        <begin position="32"/>
        <end position="195"/>
    </location>
</feature>
<feature type="active site" evidence="1">
    <location>
        <position position="175"/>
    </location>
</feature>
<feature type="active site" description="Proton donor" evidence="1">
    <location>
        <position position="224"/>
    </location>
</feature>
<feature type="active site" evidence="1">
    <location>
        <position position="294"/>
    </location>
</feature>
<organism>
    <name type="scientific">Moorella thermoacetica (strain ATCC 39073 / JCM 9320)</name>
    <dbReference type="NCBI Taxonomy" id="264732"/>
    <lineage>
        <taxon>Bacteria</taxon>
        <taxon>Bacillati</taxon>
        <taxon>Bacillota</taxon>
        <taxon>Clostridia</taxon>
        <taxon>Moorellales</taxon>
        <taxon>Moorellaceae</taxon>
        <taxon>Moorella</taxon>
    </lineage>
</organism>
<accession>Q2RK77</accession>
<keyword id="KW-0131">Cell cycle</keyword>
<keyword id="KW-0132">Cell division</keyword>
<keyword id="KW-0133">Cell shape</keyword>
<keyword id="KW-0961">Cell wall biogenesis/degradation</keyword>
<keyword id="KW-0963">Cytoplasm</keyword>
<keyword id="KW-0274">FAD</keyword>
<keyword id="KW-0285">Flavoprotein</keyword>
<keyword id="KW-0521">NADP</keyword>
<keyword id="KW-0560">Oxidoreductase</keyword>
<keyword id="KW-0573">Peptidoglycan synthesis</keyword>
<comment type="function">
    <text evidence="1">Cell wall formation.</text>
</comment>
<comment type="catalytic activity">
    <reaction evidence="1">
        <text>UDP-N-acetyl-alpha-D-muramate + NADP(+) = UDP-N-acetyl-3-O-(1-carboxyvinyl)-alpha-D-glucosamine + NADPH + H(+)</text>
        <dbReference type="Rhea" id="RHEA:12248"/>
        <dbReference type="ChEBI" id="CHEBI:15378"/>
        <dbReference type="ChEBI" id="CHEBI:57783"/>
        <dbReference type="ChEBI" id="CHEBI:58349"/>
        <dbReference type="ChEBI" id="CHEBI:68483"/>
        <dbReference type="ChEBI" id="CHEBI:70757"/>
        <dbReference type="EC" id="1.3.1.98"/>
    </reaction>
</comment>
<comment type="cofactor">
    <cofactor evidence="1">
        <name>FAD</name>
        <dbReference type="ChEBI" id="CHEBI:57692"/>
    </cofactor>
</comment>
<comment type="pathway">
    <text evidence="1">Cell wall biogenesis; peptidoglycan biosynthesis.</text>
</comment>
<comment type="subcellular location">
    <subcellularLocation>
        <location evidence="1">Cytoplasm</location>
    </subcellularLocation>
</comment>
<comment type="similarity">
    <text evidence="1">Belongs to the MurB family.</text>
</comment>
<proteinExistence type="inferred from homology"/>
<reference key="1">
    <citation type="journal article" date="2008" name="Environ. Microbiol.">
        <title>The complete genome sequence of Moorella thermoacetica (f. Clostridium thermoaceticum).</title>
        <authorList>
            <person name="Pierce E."/>
            <person name="Xie G."/>
            <person name="Barabote R.D."/>
            <person name="Saunders E."/>
            <person name="Han C.S."/>
            <person name="Detter J.C."/>
            <person name="Richardson P."/>
            <person name="Brettin T.S."/>
            <person name="Das A."/>
            <person name="Ljungdahl L.G."/>
            <person name="Ragsdale S.W."/>
        </authorList>
    </citation>
    <scope>NUCLEOTIDE SEQUENCE [LARGE SCALE GENOMIC DNA]</scope>
    <source>
        <strain>ATCC 39073 / JCM 9320</strain>
    </source>
</reference>
<dbReference type="EC" id="1.3.1.98" evidence="1"/>
<dbReference type="EMBL" id="CP000232">
    <property type="protein sequence ID" value="ABC19162.1"/>
    <property type="molecule type" value="Genomic_DNA"/>
</dbReference>
<dbReference type="RefSeq" id="YP_429705.1">
    <property type="nucleotide sequence ID" value="NC_007644.1"/>
</dbReference>
<dbReference type="SMR" id="Q2RK77"/>
<dbReference type="STRING" id="264732.Moth_0845"/>
<dbReference type="EnsemblBacteria" id="ABC19162">
    <property type="protein sequence ID" value="ABC19162"/>
    <property type="gene ID" value="Moth_0845"/>
</dbReference>
<dbReference type="KEGG" id="mta:Moth_0845"/>
<dbReference type="PATRIC" id="fig|264732.11.peg.907"/>
<dbReference type="eggNOG" id="COG0812">
    <property type="taxonomic scope" value="Bacteria"/>
</dbReference>
<dbReference type="HOGENOM" id="CLU_035304_1_1_9"/>
<dbReference type="OrthoDB" id="9804753at2"/>
<dbReference type="UniPathway" id="UPA00219"/>
<dbReference type="GO" id="GO:0005829">
    <property type="term" value="C:cytosol"/>
    <property type="evidence" value="ECO:0007669"/>
    <property type="project" value="TreeGrafter"/>
</dbReference>
<dbReference type="GO" id="GO:0071949">
    <property type="term" value="F:FAD binding"/>
    <property type="evidence" value="ECO:0007669"/>
    <property type="project" value="InterPro"/>
</dbReference>
<dbReference type="GO" id="GO:0008762">
    <property type="term" value="F:UDP-N-acetylmuramate dehydrogenase activity"/>
    <property type="evidence" value="ECO:0007669"/>
    <property type="project" value="UniProtKB-UniRule"/>
</dbReference>
<dbReference type="GO" id="GO:0051301">
    <property type="term" value="P:cell division"/>
    <property type="evidence" value="ECO:0007669"/>
    <property type="project" value="UniProtKB-KW"/>
</dbReference>
<dbReference type="GO" id="GO:0071555">
    <property type="term" value="P:cell wall organization"/>
    <property type="evidence" value="ECO:0007669"/>
    <property type="project" value="UniProtKB-KW"/>
</dbReference>
<dbReference type="GO" id="GO:0009252">
    <property type="term" value="P:peptidoglycan biosynthetic process"/>
    <property type="evidence" value="ECO:0007669"/>
    <property type="project" value="UniProtKB-UniRule"/>
</dbReference>
<dbReference type="GO" id="GO:0008360">
    <property type="term" value="P:regulation of cell shape"/>
    <property type="evidence" value="ECO:0007669"/>
    <property type="project" value="UniProtKB-KW"/>
</dbReference>
<dbReference type="Gene3D" id="3.30.465.10">
    <property type="match status" value="1"/>
</dbReference>
<dbReference type="Gene3D" id="3.90.78.10">
    <property type="entry name" value="UDP-N-acetylenolpyruvoylglucosamine reductase, C-terminal domain"/>
    <property type="match status" value="1"/>
</dbReference>
<dbReference type="Gene3D" id="3.30.43.10">
    <property type="entry name" value="Uridine Diphospho-n-acetylenolpyruvylglucosamine Reductase, domain 2"/>
    <property type="match status" value="1"/>
</dbReference>
<dbReference type="HAMAP" id="MF_00037">
    <property type="entry name" value="MurB"/>
    <property type="match status" value="1"/>
</dbReference>
<dbReference type="InterPro" id="IPR016166">
    <property type="entry name" value="FAD-bd_PCMH"/>
</dbReference>
<dbReference type="InterPro" id="IPR036318">
    <property type="entry name" value="FAD-bd_PCMH-like_sf"/>
</dbReference>
<dbReference type="InterPro" id="IPR016167">
    <property type="entry name" value="FAD-bd_PCMH_sub1"/>
</dbReference>
<dbReference type="InterPro" id="IPR016169">
    <property type="entry name" value="FAD-bd_PCMH_sub2"/>
</dbReference>
<dbReference type="InterPro" id="IPR003170">
    <property type="entry name" value="MurB"/>
</dbReference>
<dbReference type="InterPro" id="IPR011601">
    <property type="entry name" value="MurB_C"/>
</dbReference>
<dbReference type="InterPro" id="IPR036635">
    <property type="entry name" value="MurB_C_sf"/>
</dbReference>
<dbReference type="InterPro" id="IPR006094">
    <property type="entry name" value="Oxid_FAD_bind_N"/>
</dbReference>
<dbReference type="NCBIfam" id="TIGR00179">
    <property type="entry name" value="murB"/>
    <property type="match status" value="1"/>
</dbReference>
<dbReference type="NCBIfam" id="NF010480">
    <property type="entry name" value="PRK13905.1"/>
    <property type="match status" value="1"/>
</dbReference>
<dbReference type="PANTHER" id="PTHR21071">
    <property type="entry name" value="UDP-N-ACETYLENOLPYRUVOYLGLUCOSAMINE REDUCTASE"/>
    <property type="match status" value="1"/>
</dbReference>
<dbReference type="PANTHER" id="PTHR21071:SF4">
    <property type="entry name" value="UDP-N-ACETYLENOLPYRUVOYLGLUCOSAMINE REDUCTASE"/>
    <property type="match status" value="1"/>
</dbReference>
<dbReference type="Pfam" id="PF01565">
    <property type="entry name" value="FAD_binding_4"/>
    <property type="match status" value="1"/>
</dbReference>
<dbReference type="Pfam" id="PF02873">
    <property type="entry name" value="MurB_C"/>
    <property type="match status" value="1"/>
</dbReference>
<dbReference type="SUPFAM" id="SSF56176">
    <property type="entry name" value="FAD-binding/transporter-associated domain-like"/>
    <property type="match status" value="1"/>
</dbReference>
<dbReference type="SUPFAM" id="SSF56194">
    <property type="entry name" value="Uridine diphospho-N-Acetylenolpyruvylglucosamine reductase, MurB, C-terminal domain"/>
    <property type="match status" value="1"/>
</dbReference>
<dbReference type="PROSITE" id="PS51387">
    <property type="entry name" value="FAD_PCMH"/>
    <property type="match status" value="1"/>
</dbReference>